<keyword id="KW-0963">Cytoplasm</keyword>
<keyword id="KW-1185">Reference proteome</keyword>
<keyword id="KW-0677">Repeat</keyword>
<keyword id="KW-0802">TPR repeat</keyword>
<gene>
    <name evidence="1" type="primary">clu1</name>
    <name type="synonym">tif31</name>
    <name type="ORF">ACLA_038730</name>
</gene>
<protein>
    <recommendedName>
        <fullName evidence="1">Clustered mitochondria protein homolog</fullName>
    </recommendedName>
    <alternativeName>
        <fullName evidence="1">Protein TIF31 homolog</fullName>
    </alternativeName>
</protein>
<proteinExistence type="inferred from homology"/>
<evidence type="ECO:0000255" key="1">
    <source>
        <dbReference type="HAMAP-Rule" id="MF_03013"/>
    </source>
</evidence>
<evidence type="ECO:0000255" key="2">
    <source>
        <dbReference type="PROSITE-ProRule" id="PRU01167"/>
    </source>
</evidence>
<evidence type="ECO:0000256" key="3">
    <source>
        <dbReference type="SAM" id="MobiDB-lite"/>
    </source>
</evidence>
<organism>
    <name type="scientific">Aspergillus clavatus (strain ATCC 1007 / CBS 513.65 / DSM 816 / NCTC 3887 / NRRL 1 / QM 1276 / 107)</name>
    <dbReference type="NCBI Taxonomy" id="344612"/>
    <lineage>
        <taxon>Eukaryota</taxon>
        <taxon>Fungi</taxon>
        <taxon>Dikarya</taxon>
        <taxon>Ascomycota</taxon>
        <taxon>Pezizomycotina</taxon>
        <taxon>Eurotiomycetes</taxon>
        <taxon>Eurotiomycetidae</taxon>
        <taxon>Eurotiales</taxon>
        <taxon>Aspergillaceae</taxon>
        <taxon>Aspergillus</taxon>
        <taxon>Aspergillus subgen. Fumigati</taxon>
    </lineage>
</organism>
<feature type="chain" id="PRO_0000366393" description="Clustered mitochondria protein homolog">
    <location>
        <begin position="1"/>
        <end position="1259"/>
    </location>
</feature>
<feature type="domain" description="Clu" evidence="2">
    <location>
        <begin position="324"/>
        <end position="568"/>
    </location>
</feature>
<feature type="repeat" description="TPR 1">
    <location>
        <begin position="982"/>
        <end position="1015"/>
    </location>
</feature>
<feature type="repeat" description="TPR 2">
    <location>
        <begin position="1024"/>
        <end position="1057"/>
    </location>
</feature>
<feature type="repeat" description="TPR 3">
    <location>
        <begin position="1066"/>
        <end position="1099"/>
    </location>
</feature>
<feature type="region of interest" description="Disordered" evidence="3">
    <location>
        <begin position="1"/>
        <end position="38"/>
    </location>
</feature>
<feature type="region of interest" description="Disordered" evidence="3">
    <location>
        <begin position="612"/>
        <end position="647"/>
    </location>
</feature>
<feature type="region of interest" description="Disordered" evidence="3">
    <location>
        <begin position="881"/>
        <end position="908"/>
    </location>
</feature>
<feature type="region of interest" description="Disordered" evidence="3">
    <location>
        <begin position="1192"/>
        <end position="1215"/>
    </location>
</feature>
<feature type="region of interest" description="Disordered" evidence="3">
    <location>
        <begin position="1229"/>
        <end position="1259"/>
    </location>
</feature>
<feature type="compositionally biased region" description="Polar residues" evidence="3">
    <location>
        <begin position="1"/>
        <end position="27"/>
    </location>
</feature>
<feature type="compositionally biased region" description="Basic and acidic residues" evidence="3">
    <location>
        <begin position="612"/>
        <end position="628"/>
    </location>
</feature>
<feature type="compositionally biased region" description="Basic and acidic residues" evidence="3">
    <location>
        <begin position="634"/>
        <end position="647"/>
    </location>
</feature>
<comment type="function">
    <text evidence="1">mRNA-binding protein involved in proper cytoplasmic distribution of mitochondria.</text>
</comment>
<comment type="subunit">
    <text evidence="1">May associate with the eukaryotic translation initiation factor 3 (eIF-3) complex.</text>
</comment>
<comment type="subcellular location">
    <subcellularLocation>
        <location evidence="1">Cytoplasm</location>
    </subcellularLocation>
</comment>
<comment type="similarity">
    <text evidence="1">Belongs to the CLU family.</text>
</comment>
<accession>A1CKI4</accession>
<name>CLU_ASPCL</name>
<sequence length="1259" mass="140392">MSQTNGNMEHSKETPQSQEVEQLTNGNHPEEQQEEEENNGGLFQISVKLPHEPHKIQVMVSSQEQVQDVRQSIVELPGTFQYTCFHLEFNGKRINDFVELSEVEDLKADSEIVLVEDPYTEKEARMHTVRIRDLVGAAGDRVDNLQGLDAGLSLHDSVTAEAAASEEKEHSLSKYDITASPSLKTILPRDEAPLPKTVKSISLSAWNPPPYHLRQKGHLLYLQVATNEGEQFQVTSHVSGFYVNKCSNAKFDPSPRTIPKKVSAHSLLTLISKISPSFNTAFEALQESNNQKDLLTTFPFQNAIPNSPWLVPPPSSNVNVHQADITRSQESYLISGVDNAETLRDWNEEFQTTRELPRETVQDRVFRERLTSKLFADYNEAAARGAVLVARGEVAPLNPTEDRDAQIFVYNNIFYSFGADGVGTFASEGGDEAARVAVGKDVLGIKAVNQLDINGLFTPGTVVVDYLGKRIVGQSIVPGIFKQREPGEHQIDYGGVEGKDVVATHPDFVSVFEKMSKALRIKKHAVWDKDSKRHDLEGSVETKGLLGTDGRKYVLDLYRVTPLDVMWQEEPNSEEYPHRMSVLRLELVEAYWRSKMSQYVKAEVERRRAVKAEAEKEKPAESSESKEQDSEEKTEEKTEESSDQERVDISGFQLALNPDVCSGQVPQTDEEKQQWAEDEKEVRDACDFLRSKVMPELVQDLHDGDVGFPMDGQSLGQLLHKRGINIRYLGKLAQLSKEKGARLDALTTLLIQEMIARAFKHIANRFMRNVPAPFVASCVAHLLNCLLGADVNANPRAEIDASLREFYPEGDFTFETVTPETLRAEIEQQVALRYRFTLESEWFASLRHLQLLRDIAIKLGLQLGAREYAFTKDQLPPKVPVVNGANNAAQDEGKKKKKKGADKSPSRAIVEEKPAVSIVPDDIVNVVPLVKDASPRSSLAEEALEAGRISLMQNQKQLGQELILESLSLHEQIYGILHPEVAKLYHQLSMLYYQTDEKEAAVELARKAVIVTERTLGVDSADTILAYLNLSLFEHASGNTKTALVYIKHAMDLWKIIYGPNHPDSITTMNNAAVMLQHLKQYADSRKWFEASLSVCESLFGKQSINTATILFQLAQALALDQDSKGAVGKMRDAYNIFLSQLGPDDRNTKEAETWLEQLTQNAVSIAKHAKDIQARRLRRINMNPRVTTLGTKVQPQVGQTAPEASGAKNAANASLDSRSIDELLKFIEGGDTSSSRSKQKKRAAASNPKLRGSKKSSA</sequence>
<dbReference type="EMBL" id="DS027056">
    <property type="protein sequence ID" value="EAW09658.1"/>
    <property type="molecule type" value="Genomic_DNA"/>
</dbReference>
<dbReference type="RefSeq" id="XP_001271084.1">
    <property type="nucleotide sequence ID" value="XM_001271083.1"/>
</dbReference>
<dbReference type="SMR" id="A1CKI4"/>
<dbReference type="STRING" id="344612.A1CKI4"/>
<dbReference type="EnsemblFungi" id="EAW09658">
    <property type="protein sequence ID" value="EAW09658"/>
    <property type="gene ID" value="ACLA_038730"/>
</dbReference>
<dbReference type="GeneID" id="4703296"/>
<dbReference type="KEGG" id="act:ACLA_038730"/>
<dbReference type="VEuPathDB" id="FungiDB:ACLA_038730"/>
<dbReference type="eggNOG" id="KOG1839">
    <property type="taxonomic scope" value="Eukaryota"/>
</dbReference>
<dbReference type="HOGENOM" id="CLU_003256_2_0_1"/>
<dbReference type="OMA" id="HPVWDKD"/>
<dbReference type="OrthoDB" id="1414216at2759"/>
<dbReference type="Proteomes" id="UP000006701">
    <property type="component" value="Unassembled WGS sequence"/>
</dbReference>
<dbReference type="GO" id="GO:0005737">
    <property type="term" value="C:cytoplasm"/>
    <property type="evidence" value="ECO:0007669"/>
    <property type="project" value="UniProtKB-SubCell"/>
</dbReference>
<dbReference type="GO" id="GO:0003729">
    <property type="term" value="F:mRNA binding"/>
    <property type="evidence" value="ECO:0007669"/>
    <property type="project" value="TreeGrafter"/>
</dbReference>
<dbReference type="GO" id="GO:0048312">
    <property type="term" value="P:intracellular distribution of mitochondria"/>
    <property type="evidence" value="ECO:0007669"/>
    <property type="project" value="TreeGrafter"/>
</dbReference>
<dbReference type="GO" id="GO:0007005">
    <property type="term" value="P:mitochondrion organization"/>
    <property type="evidence" value="ECO:0007669"/>
    <property type="project" value="UniProtKB-UniRule"/>
</dbReference>
<dbReference type="CDD" id="cd15466">
    <property type="entry name" value="CLU-central"/>
    <property type="match status" value="1"/>
</dbReference>
<dbReference type="FunFam" id="1.25.40.10:FF:000293">
    <property type="entry name" value="Clustered mitochondria protein homolog"/>
    <property type="match status" value="1"/>
</dbReference>
<dbReference type="FunFam" id="1.25.40.10:FF:000532">
    <property type="entry name" value="Clustered mitochondria protein homolog"/>
    <property type="match status" value="1"/>
</dbReference>
<dbReference type="Gene3D" id="1.25.40.10">
    <property type="entry name" value="Tetratricopeptide repeat domain"/>
    <property type="match status" value="2"/>
</dbReference>
<dbReference type="HAMAP" id="MF_03013">
    <property type="entry name" value="CLU"/>
    <property type="match status" value="1"/>
</dbReference>
<dbReference type="InterPro" id="IPR033646">
    <property type="entry name" value="CLU-central"/>
</dbReference>
<dbReference type="InterPro" id="IPR025697">
    <property type="entry name" value="CLU_dom"/>
</dbReference>
<dbReference type="InterPro" id="IPR028275">
    <property type="entry name" value="CLU_N"/>
</dbReference>
<dbReference type="InterPro" id="IPR027523">
    <property type="entry name" value="CLU_prot"/>
</dbReference>
<dbReference type="InterPro" id="IPR023231">
    <property type="entry name" value="GSKIP_dom_sf"/>
</dbReference>
<dbReference type="InterPro" id="IPR011990">
    <property type="entry name" value="TPR-like_helical_dom_sf"/>
</dbReference>
<dbReference type="InterPro" id="IPR019734">
    <property type="entry name" value="TPR_rpt"/>
</dbReference>
<dbReference type="PANTHER" id="PTHR12601:SF6">
    <property type="entry name" value="CLUSTERED MITOCHONDRIA PROTEIN HOMOLOG"/>
    <property type="match status" value="1"/>
</dbReference>
<dbReference type="PANTHER" id="PTHR12601">
    <property type="entry name" value="EUKARYOTIC TRANSLATION INITIATION FACTOR 3 SUBUNIT EIF-3"/>
    <property type="match status" value="1"/>
</dbReference>
<dbReference type="Pfam" id="PF13236">
    <property type="entry name" value="CLU"/>
    <property type="match status" value="1"/>
</dbReference>
<dbReference type="Pfam" id="PF15044">
    <property type="entry name" value="CLU_N"/>
    <property type="match status" value="1"/>
</dbReference>
<dbReference type="Pfam" id="PF12807">
    <property type="entry name" value="eIF3_p135"/>
    <property type="match status" value="1"/>
</dbReference>
<dbReference type="Pfam" id="PF13374">
    <property type="entry name" value="TPR_10"/>
    <property type="match status" value="2"/>
</dbReference>
<dbReference type="Pfam" id="PF13424">
    <property type="entry name" value="TPR_12"/>
    <property type="match status" value="1"/>
</dbReference>
<dbReference type="SUPFAM" id="SSF103107">
    <property type="entry name" value="Hypothetical protein c14orf129, hspc210"/>
    <property type="match status" value="1"/>
</dbReference>
<dbReference type="SUPFAM" id="SSF48452">
    <property type="entry name" value="TPR-like"/>
    <property type="match status" value="2"/>
</dbReference>
<dbReference type="PROSITE" id="PS51823">
    <property type="entry name" value="CLU"/>
    <property type="match status" value="1"/>
</dbReference>
<dbReference type="PROSITE" id="PS50005">
    <property type="entry name" value="TPR"/>
    <property type="match status" value="1"/>
</dbReference>
<reference key="1">
    <citation type="journal article" date="2008" name="PLoS Genet.">
        <title>Genomic islands in the pathogenic filamentous fungus Aspergillus fumigatus.</title>
        <authorList>
            <person name="Fedorova N.D."/>
            <person name="Khaldi N."/>
            <person name="Joardar V.S."/>
            <person name="Maiti R."/>
            <person name="Amedeo P."/>
            <person name="Anderson M.J."/>
            <person name="Crabtree J."/>
            <person name="Silva J.C."/>
            <person name="Badger J.H."/>
            <person name="Albarraq A."/>
            <person name="Angiuoli S."/>
            <person name="Bussey H."/>
            <person name="Bowyer P."/>
            <person name="Cotty P.J."/>
            <person name="Dyer P.S."/>
            <person name="Egan A."/>
            <person name="Galens K."/>
            <person name="Fraser-Liggett C.M."/>
            <person name="Haas B.J."/>
            <person name="Inman J.M."/>
            <person name="Kent R."/>
            <person name="Lemieux S."/>
            <person name="Malavazi I."/>
            <person name="Orvis J."/>
            <person name="Roemer T."/>
            <person name="Ronning C.M."/>
            <person name="Sundaram J.P."/>
            <person name="Sutton G."/>
            <person name="Turner G."/>
            <person name="Venter J.C."/>
            <person name="White O.R."/>
            <person name="Whitty B.R."/>
            <person name="Youngman P."/>
            <person name="Wolfe K.H."/>
            <person name="Goldman G.H."/>
            <person name="Wortman J.R."/>
            <person name="Jiang B."/>
            <person name="Denning D.W."/>
            <person name="Nierman W.C."/>
        </authorList>
    </citation>
    <scope>NUCLEOTIDE SEQUENCE [LARGE SCALE GENOMIC DNA]</scope>
    <source>
        <strain>ATCC 1007 / CBS 513.65 / DSM 816 / NCTC 3887 / NRRL 1 / QM 1276 / 107</strain>
    </source>
</reference>